<reference key="1">
    <citation type="journal article" date="2001" name="Nature">
        <title>Genome sequence of Yersinia pestis, the causative agent of plague.</title>
        <authorList>
            <person name="Parkhill J."/>
            <person name="Wren B.W."/>
            <person name="Thomson N.R."/>
            <person name="Titball R.W."/>
            <person name="Holden M.T.G."/>
            <person name="Prentice M.B."/>
            <person name="Sebaihia M."/>
            <person name="James K.D."/>
            <person name="Churcher C.M."/>
            <person name="Mungall K.L."/>
            <person name="Baker S."/>
            <person name="Basham D."/>
            <person name="Bentley S.D."/>
            <person name="Brooks K."/>
            <person name="Cerdeno-Tarraga A.-M."/>
            <person name="Chillingworth T."/>
            <person name="Cronin A."/>
            <person name="Davies R.M."/>
            <person name="Davis P."/>
            <person name="Dougan G."/>
            <person name="Feltwell T."/>
            <person name="Hamlin N."/>
            <person name="Holroyd S."/>
            <person name="Jagels K."/>
            <person name="Karlyshev A.V."/>
            <person name="Leather S."/>
            <person name="Moule S."/>
            <person name="Oyston P.C.F."/>
            <person name="Quail M.A."/>
            <person name="Rutherford K.M."/>
            <person name="Simmonds M."/>
            <person name="Skelton J."/>
            <person name="Stevens K."/>
            <person name="Whitehead S."/>
            <person name="Barrell B.G."/>
        </authorList>
    </citation>
    <scope>NUCLEOTIDE SEQUENCE [LARGE SCALE GENOMIC DNA]</scope>
    <source>
        <strain>CO-92 / Biovar Orientalis</strain>
    </source>
</reference>
<reference key="2">
    <citation type="journal article" date="2002" name="J. Bacteriol.">
        <title>Genome sequence of Yersinia pestis KIM.</title>
        <authorList>
            <person name="Deng W."/>
            <person name="Burland V."/>
            <person name="Plunkett G. III"/>
            <person name="Boutin A."/>
            <person name="Mayhew G.F."/>
            <person name="Liss P."/>
            <person name="Perna N.T."/>
            <person name="Rose D.J."/>
            <person name="Mau B."/>
            <person name="Zhou S."/>
            <person name="Schwartz D.C."/>
            <person name="Fetherston J.D."/>
            <person name="Lindler L.E."/>
            <person name="Brubaker R.R."/>
            <person name="Plano G.V."/>
            <person name="Straley S.C."/>
            <person name="McDonough K.A."/>
            <person name="Nilles M.L."/>
            <person name="Matson J.S."/>
            <person name="Blattner F.R."/>
            <person name="Perry R.D."/>
        </authorList>
    </citation>
    <scope>NUCLEOTIDE SEQUENCE [LARGE SCALE GENOMIC DNA]</scope>
    <source>
        <strain>KIM10+ / Biovar Mediaevalis</strain>
    </source>
</reference>
<reference key="3">
    <citation type="journal article" date="2004" name="DNA Res.">
        <title>Complete genome sequence of Yersinia pestis strain 91001, an isolate avirulent to humans.</title>
        <authorList>
            <person name="Song Y."/>
            <person name="Tong Z."/>
            <person name="Wang J."/>
            <person name="Wang L."/>
            <person name="Guo Z."/>
            <person name="Han Y."/>
            <person name="Zhang J."/>
            <person name="Pei D."/>
            <person name="Zhou D."/>
            <person name="Qin H."/>
            <person name="Pang X."/>
            <person name="Han Y."/>
            <person name="Zhai J."/>
            <person name="Li M."/>
            <person name="Cui B."/>
            <person name="Qi Z."/>
            <person name="Jin L."/>
            <person name="Dai R."/>
            <person name="Chen F."/>
            <person name="Li S."/>
            <person name="Ye C."/>
            <person name="Du Z."/>
            <person name="Lin W."/>
            <person name="Wang J."/>
            <person name="Yu J."/>
            <person name="Yang H."/>
            <person name="Wang J."/>
            <person name="Huang P."/>
            <person name="Yang R."/>
        </authorList>
    </citation>
    <scope>NUCLEOTIDE SEQUENCE [LARGE SCALE GENOMIC DNA]</scope>
    <source>
        <strain>91001 / Biovar Mediaevalis</strain>
    </source>
</reference>
<accession>Q8ZFW5</accession>
<accession>Q0WGL4</accession>
<accession>Q8D082</accession>
<feature type="chain" id="PRO_0000072774" description="Pole-localizer protein TmaR">
    <location>
        <begin position="1"/>
        <end position="105"/>
    </location>
</feature>
<feature type="coiled-coil region" evidence="1">
    <location>
        <begin position="22"/>
        <end position="42"/>
    </location>
</feature>
<feature type="coiled-coil region" evidence="1">
    <location>
        <begin position="77"/>
        <end position="104"/>
    </location>
</feature>
<organism>
    <name type="scientific">Yersinia pestis</name>
    <dbReference type="NCBI Taxonomy" id="632"/>
    <lineage>
        <taxon>Bacteria</taxon>
        <taxon>Pseudomonadati</taxon>
        <taxon>Pseudomonadota</taxon>
        <taxon>Gammaproteobacteria</taxon>
        <taxon>Enterobacterales</taxon>
        <taxon>Yersiniaceae</taxon>
        <taxon>Yersinia</taxon>
    </lineage>
</organism>
<comment type="function">
    <text evidence="1">Pole-localizer protein involved in the regulation of several cellular processes.</text>
</comment>
<comment type="subcellular location">
    <subcellularLocation>
        <location evidence="1">Cytoplasm</location>
    </subcellularLocation>
</comment>
<comment type="similarity">
    <text evidence="1">Belongs to the pole-localizer TmaR family.</text>
</comment>
<comment type="sequence caution" evidence="2">
    <conflict type="erroneous initiation">
        <sequence resource="EMBL-CDS" id="AAM86162"/>
    </conflict>
</comment>
<evidence type="ECO:0000255" key="1">
    <source>
        <dbReference type="HAMAP-Rule" id="MF_00683"/>
    </source>
</evidence>
<evidence type="ECO:0000305" key="2"/>
<proteinExistence type="inferred from homology"/>
<name>TMAR_YERPE</name>
<sequence length="105" mass="12461">MDNASKPTFQDVLEFVRMFRRKNKLQREIVDNEKKIRDNQKRVLLLDNLSEYIKPGMSIEEVQAIIANMRGDYEDRVDDYIIKNADLSKERRELSKKLKAMGEVK</sequence>
<protein>
    <recommendedName>
        <fullName evidence="1">Pole-localizer protein TmaR</fullName>
    </recommendedName>
</protein>
<gene>
    <name evidence="1" type="primary">tmaR</name>
    <name type="ordered locus">YPO1560</name>
    <name type="ordered locus">y2607</name>
    <name type="ordered locus">YP_1448</name>
</gene>
<dbReference type="EMBL" id="AL590842">
    <property type="protein sequence ID" value="CAL20205.1"/>
    <property type="molecule type" value="Genomic_DNA"/>
</dbReference>
<dbReference type="EMBL" id="AE009952">
    <property type="protein sequence ID" value="AAM86162.1"/>
    <property type="status" value="ALT_INIT"/>
    <property type="molecule type" value="Genomic_DNA"/>
</dbReference>
<dbReference type="EMBL" id="AE017042">
    <property type="protein sequence ID" value="AAS61688.1"/>
    <property type="molecule type" value="Genomic_DNA"/>
</dbReference>
<dbReference type="PIR" id="AC0190">
    <property type="entry name" value="AC0190"/>
</dbReference>
<dbReference type="RefSeq" id="YP_002346574.1">
    <property type="nucleotide sequence ID" value="NC_003143.1"/>
</dbReference>
<dbReference type="SMR" id="Q8ZFW5"/>
<dbReference type="IntAct" id="Q8ZFW5">
    <property type="interactions" value="3"/>
</dbReference>
<dbReference type="STRING" id="214092.YPO1560"/>
<dbReference type="PaxDb" id="214092-YPO1560"/>
<dbReference type="DNASU" id="1147554"/>
<dbReference type="EnsemblBacteria" id="AAS61688">
    <property type="protein sequence ID" value="AAS61688"/>
    <property type="gene ID" value="YP_1448"/>
</dbReference>
<dbReference type="KEGG" id="ype:YPO1560"/>
<dbReference type="KEGG" id="ypk:y2607"/>
<dbReference type="KEGG" id="ypm:YP_1448"/>
<dbReference type="PATRIC" id="fig|214092.21.peg.1898"/>
<dbReference type="eggNOG" id="COG2926">
    <property type="taxonomic scope" value="Bacteria"/>
</dbReference>
<dbReference type="HOGENOM" id="CLU_153146_0_0_6"/>
<dbReference type="OMA" id="ENMRDDY"/>
<dbReference type="OrthoDB" id="90485at2"/>
<dbReference type="Proteomes" id="UP000000815">
    <property type="component" value="Chromosome"/>
</dbReference>
<dbReference type="Proteomes" id="UP000001019">
    <property type="component" value="Chromosome"/>
</dbReference>
<dbReference type="Proteomes" id="UP000002490">
    <property type="component" value="Chromosome"/>
</dbReference>
<dbReference type="GO" id="GO:0005829">
    <property type="term" value="C:cytosol"/>
    <property type="evidence" value="ECO:0000318"/>
    <property type="project" value="GO_Central"/>
</dbReference>
<dbReference type="HAMAP" id="MF_00683">
    <property type="entry name" value="Pole_loc_TmaR"/>
    <property type="match status" value="1"/>
</dbReference>
<dbReference type="InterPro" id="IPR007458">
    <property type="entry name" value="DUF496"/>
</dbReference>
<dbReference type="InterPro" id="IPR053375">
    <property type="entry name" value="UPF0265"/>
</dbReference>
<dbReference type="NCBIfam" id="NF003844">
    <property type="entry name" value="PRK05423.1"/>
    <property type="match status" value="1"/>
</dbReference>
<dbReference type="NCBIfam" id="NF040881">
    <property type="entry name" value="PTS_reg_TmaR"/>
    <property type="match status" value="1"/>
</dbReference>
<dbReference type="PANTHER" id="PTHR39591">
    <property type="entry name" value="UPF0265 PROTEIN YEEX"/>
    <property type="match status" value="1"/>
</dbReference>
<dbReference type="PANTHER" id="PTHR39591:SF1">
    <property type="entry name" value="UPF0265 PROTEIN YEEX"/>
    <property type="match status" value="1"/>
</dbReference>
<dbReference type="Pfam" id="PF04363">
    <property type="entry name" value="DUF496"/>
    <property type="match status" value="1"/>
</dbReference>
<dbReference type="PIRSF" id="PIRSF028773">
    <property type="entry name" value="UCP028773"/>
    <property type="match status" value="1"/>
</dbReference>
<keyword id="KW-0175">Coiled coil</keyword>
<keyword id="KW-0963">Cytoplasm</keyword>
<keyword id="KW-1185">Reference proteome</keyword>